<keyword id="KW-0148">Chlorophyll</keyword>
<keyword id="KW-0150">Chloroplast</keyword>
<keyword id="KW-0157">Chromophore</keyword>
<keyword id="KW-0903">Direct protein sequencing</keyword>
<keyword id="KW-0460">Magnesium</keyword>
<keyword id="KW-0472">Membrane</keyword>
<keyword id="KW-0479">Metal-binding</keyword>
<keyword id="KW-0597">Phosphoprotein</keyword>
<keyword id="KW-0602">Photosynthesis</keyword>
<keyword id="KW-0603">Photosystem I</keyword>
<keyword id="KW-0604">Photosystem II</keyword>
<keyword id="KW-0934">Plastid</keyword>
<keyword id="KW-0793">Thylakoid</keyword>
<name>CB23C_PEA</name>
<feature type="chain" id="PRO_0000310858" description="Chlorophyll a-b binding protein 3c, chloroplastic">
    <location>
        <begin position="1" status="less than"/>
        <end position="22" status="greater than"/>
    </location>
</feature>
<feature type="non-terminal residue" evidence="5">
    <location>
        <position position="1"/>
    </location>
</feature>
<feature type="non-terminal residue" evidence="5">
    <location>
        <position position="22"/>
    </location>
</feature>
<reference evidence="4 5" key="1">
    <citation type="journal article" date="1990" name="Eur. J. Biochem.">
        <title>Dicyclohexylcarbodiimide-binding proteins related to the short circuit of the proton-pumping activity of photosystem II. Identified as light-harvesting chlorophyll-a/b-binding proteins.</title>
        <authorList>
            <person name="Jahns P."/>
            <person name="Junge W."/>
        </authorList>
    </citation>
    <scope>PROTEIN SEQUENCE</scope>
    <scope>FUNCTION</scope>
    <source>
        <tissue evidence="3">Seedling</tissue>
    </source>
</reference>
<proteinExistence type="evidence at protein level"/>
<accession>Q7M1L0</accession>
<accession>P35390</accession>
<comment type="function">
    <text evidence="3 4">The light-harvesting complex (LHC) functions as a light receptor, it captures and delivers excitation energy to photosystems with which it is closely associated.</text>
</comment>
<comment type="function">
    <text evidence="3">May channel protons produced in the catalytic Mn center of water oxidation into the thylakoid lumen.</text>
</comment>
<comment type="cofactor">
    <text evidence="1">Binds at least 14 chlorophylls (8 Chl-a and 6 Chl-b) and carotenoids such as lutein and neoxanthin.</text>
</comment>
<comment type="subunit">
    <text evidence="4">The LHC complex consists of chlorophyll a-b binding proteins.</text>
</comment>
<comment type="subcellular location">
    <subcellularLocation>
        <location evidence="4">Plastid</location>
        <location evidence="4">Chloroplast thylakoid membrane</location>
        <topology evidence="4">Multi-pass membrane protein</topology>
    </subcellularLocation>
</comment>
<comment type="domain">
    <text evidence="4">The N-terminus of the protein extends into the stroma where it is involved with adhesion of granal membranes and post-translational modifications; both are believed to mediate the distribution of excitation energy between photosystems I and II.</text>
</comment>
<comment type="PTM">
    <text evidence="1">Photoregulated by reversible phosphorylation of its threonine residues.</text>
</comment>
<comment type="similarity">
    <text evidence="2">Belongs to the light-harvesting chlorophyll a/b-binding (LHC) protein family.</text>
</comment>
<evidence type="ECO:0000250" key="1">
    <source>
        <dbReference type="UniProtKB" id="P07371"/>
    </source>
</evidence>
<evidence type="ECO:0000255" key="2"/>
<evidence type="ECO:0000269" key="3">
    <source>
    </source>
</evidence>
<evidence type="ECO:0000305" key="4"/>
<evidence type="ECO:0000312" key="5">
    <source>
        <dbReference type="PIR" id="S13977"/>
    </source>
</evidence>
<organism>
    <name type="scientific">Pisum sativum</name>
    <name type="common">Garden pea</name>
    <name type="synonym">Lathyrus oleraceus</name>
    <dbReference type="NCBI Taxonomy" id="3888"/>
    <lineage>
        <taxon>Eukaryota</taxon>
        <taxon>Viridiplantae</taxon>
        <taxon>Streptophyta</taxon>
        <taxon>Embryophyta</taxon>
        <taxon>Tracheophyta</taxon>
        <taxon>Spermatophyta</taxon>
        <taxon>Magnoliopsida</taxon>
        <taxon>eudicotyledons</taxon>
        <taxon>Gunneridae</taxon>
        <taxon>Pentapetalae</taxon>
        <taxon>rosids</taxon>
        <taxon>fabids</taxon>
        <taxon>Fabales</taxon>
        <taxon>Fabaceae</taxon>
        <taxon>Papilionoideae</taxon>
        <taxon>50 kb inversion clade</taxon>
        <taxon>NPAAA clade</taxon>
        <taxon>Hologalegina</taxon>
        <taxon>IRL clade</taxon>
        <taxon>Fabeae</taxon>
        <taxon>Pisum</taxon>
    </lineage>
</organism>
<protein>
    <recommendedName>
        <fullName>Chlorophyll a-b binding protein 3c, chloroplastic</fullName>
    </recommendedName>
    <alternativeName>
        <fullName>LHCII type I CAB-3c</fullName>
    </alternativeName>
</protein>
<sequence length="22" mass="2213">LGALGCVFPELLSGNGVKFGYA</sequence>
<dbReference type="PIR" id="S13977">
    <property type="entry name" value="S13977"/>
</dbReference>
<dbReference type="GO" id="GO:0009535">
    <property type="term" value="C:chloroplast thylakoid membrane"/>
    <property type="evidence" value="ECO:0007669"/>
    <property type="project" value="UniProtKB-SubCell"/>
</dbReference>
<dbReference type="GO" id="GO:0009522">
    <property type="term" value="C:photosystem I"/>
    <property type="evidence" value="ECO:0007669"/>
    <property type="project" value="UniProtKB-KW"/>
</dbReference>
<dbReference type="GO" id="GO:0009523">
    <property type="term" value="C:photosystem II"/>
    <property type="evidence" value="ECO:0007669"/>
    <property type="project" value="UniProtKB-KW"/>
</dbReference>
<dbReference type="GO" id="GO:0016168">
    <property type="term" value="F:chlorophyll binding"/>
    <property type="evidence" value="ECO:0007669"/>
    <property type="project" value="UniProtKB-KW"/>
</dbReference>
<dbReference type="GO" id="GO:0046872">
    <property type="term" value="F:metal ion binding"/>
    <property type="evidence" value="ECO:0007669"/>
    <property type="project" value="UniProtKB-KW"/>
</dbReference>
<dbReference type="GO" id="GO:0015979">
    <property type="term" value="P:photosynthesis"/>
    <property type="evidence" value="ECO:0007669"/>
    <property type="project" value="UniProtKB-KW"/>
</dbReference>